<protein>
    <recommendedName>
        <fullName evidence="12">Regulatory protein NPR3</fullName>
    </recommendedName>
    <alternativeName>
        <fullName evidence="12">BTB/POZ domain-containing protein NPR3</fullName>
    </alternativeName>
</protein>
<feature type="chain" id="PRO_0000407992" description="Regulatory protein NPR3">
    <location>
        <begin position="1"/>
        <end position="586"/>
    </location>
</feature>
<feature type="domain" description="BTB" evidence="4">
    <location>
        <begin position="60"/>
        <end position="135"/>
    </location>
</feature>
<feature type="repeat" description="ANK 1" evidence="3">
    <location>
        <begin position="261"/>
        <end position="291"/>
    </location>
</feature>
<feature type="repeat" description="ANK 2" evidence="3">
    <location>
        <begin position="293"/>
        <end position="320"/>
    </location>
</feature>
<feature type="repeat" description="ANK 3" evidence="3">
    <location>
        <begin position="324"/>
        <end position="353"/>
    </location>
</feature>
<feature type="zinc finger region" description="C2HC NPR-type" evidence="5">
    <location>
        <begin position="138"/>
        <end position="152"/>
    </location>
</feature>
<feature type="region of interest" description="Salicylic acid-binding core (SBC)" evidence="2">
    <location>
        <begin position="383"/>
        <end position="523"/>
    </location>
</feature>
<feature type="region of interest" description="Disordered" evidence="6">
    <location>
        <begin position="554"/>
        <end position="586"/>
    </location>
</feature>
<feature type="compositionally biased region" description="Low complexity" evidence="6">
    <location>
        <begin position="565"/>
        <end position="577"/>
    </location>
</feature>
<feature type="binding site" evidence="5">
    <location>
        <position position="141"/>
    </location>
    <ligand>
        <name>Zn(2+)</name>
        <dbReference type="ChEBI" id="CHEBI:29105"/>
    </ligand>
</feature>
<feature type="binding site" evidence="5">
    <location>
        <position position="146"/>
    </location>
    <ligand>
        <name>Zn(2+)</name>
        <dbReference type="ChEBI" id="CHEBI:29105"/>
    </ligand>
</feature>
<feature type="binding site" evidence="5">
    <location>
        <position position="148"/>
    </location>
    <ligand>
        <name>Zn(2+)</name>
        <dbReference type="ChEBI" id="CHEBI:29105"/>
    </ligand>
</feature>
<feature type="binding site" evidence="5">
    <location>
        <position position="151"/>
    </location>
    <ligand>
        <name>Zn(2+)</name>
        <dbReference type="ChEBI" id="CHEBI:29105"/>
    </ligand>
</feature>
<feature type="binding site" evidence="11">
    <location>
        <position position="428"/>
    </location>
    <ligand>
        <name>salicylate</name>
        <dbReference type="ChEBI" id="CHEBI:30762"/>
    </ligand>
</feature>
<feature type="modified residue" description="Phosphoserine" evidence="1">
    <location>
        <position position="10"/>
    </location>
</feature>
<feature type="mutagenesis site" description="Impaired salicylic acid (SA) binding." evidence="11">
    <original>R</original>
    <variation>A</variation>
    <location>
        <position position="428"/>
    </location>
</feature>
<comment type="function">
    <text evidence="8 9 11">Salicylic acid (SA)-binding substrate-specific adapter of an E3 ubiquitin-protein ligase complex (CUL3-RBX1-BTB) which mediates the ubiquitination and subsequent proteasomal degradation of NPR1 in response to SA (PubMed:22699612, PubMed:32788727). Together with NPR4, acts as receptor of salicylic acid to monitor immunity in a NPR1-dependent manner and induce systemic acquired resistance (SAR) (PubMed:22699612, PubMed:32788727). Involved in the regulation of basal defense responses against pathogens, and may be implicated in the cross-talk between the SA- and JA-dependent signaling pathways (PubMed:17076807).</text>
</comment>
<comment type="pathway">
    <text evidence="9">Protein modification; protein ubiquitination.</text>
</comment>
<comment type="subunit">
    <text evidence="8 9 10">Forms homodimers and heterodimers with NPR4 in the presence of salicylic acid (SA) (PubMed:22699612). Interacts with TGA2, TGA3, TGA5 and TGA6 (PubMed:17076807). Interacts with CUL3A, a core component of the cullin-RING ubiquitin ligases (CRL) (PubMed:22699612). Interacts with TGA2 in vivo in the nucleus (PubMed:17076807). Binds to NPR1; this interaction is promoted by association with SA, probably due to conformational changes (PubMed:22699612, PubMed:26269953).</text>
</comment>
<comment type="interaction">
    <interactant intactId="EBI-4441365">
        <id>Q8L746</id>
    </interactant>
    <interactant intactId="EBI-4445291">
        <id>Q9LUX9</id>
        <label>At5g58800</label>
    </interactant>
    <organismsDiffer>false</organismsDiffer>
    <experiments>3</experiments>
</comment>
<comment type="interaction">
    <interactant intactId="EBI-4441365">
        <id>Q8L746</id>
    </interactant>
    <interactant intactId="EBI-541099">
        <id>Q9FNZ5</id>
        <label>NIMIN-1</label>
    </interactant>
    <organismsDiffer>false</organismsDiffer>
    <experiments>4</experiments>
</comment>
<comment type="interaction">
    <interactant intactId="EBI-4441365">
        <id>Q8L746</id>
    </interactant>
    <interactant intactId="EBI-541107">
        <id>Q9LUA3</id>
        <label>NIMIN-2</label>
    </interactant>
    <organismsDiffer>false</organismsDiffer>
    <experiments>3</experiments>
</comment>
<comment type="interaction">
    <interactant intactId="EBI-4441365">
        <id>Q8L746</id>
    </interactant>
    <interactant intactId="EBI-541115">
        <id>Q9FNZ4</id>
        <label>NIMIN-3</label>
    </interactant>
    <organismsDiffer>false</organismsDiffer>
    <experiments>3</experiments>
</comment>
<comment type="interaction">
    <interactant intactId="EBI-4441365">
        <id>Q8L746</id>
    </interactant>
    <interactant intactId="EBI-1392127">
        <id>P93002</id>
        <label>NPR1</label>
    </interactant>
    <organismsDiffer>false</organismsDiffer>
    <experiments>2</experiments>
</comment>
<comment type="interaction">
    <interactant intactId="EBI-4441365">
        <id>Q8L746</id>
    </interactant>
    <interactant intactId="EBI-4441365">
        <id>Q8L746</id>
        <label>NPR3</label>
    </interactant>
    <organismsDiffer>false</organismsDiffer>
    <experiments>4</experiments>
</comment>
<comment type="interaction">
    <interactant intactId="EBI-4441365">
        <id>Q8L746</id>
    </interactant>
    <interactant intactId="EBI-1392093">
        <id>Q5ICL9</id>
        <label>NPR4</label>
    </interactant>
    <organismsDiffer>false</organismsDiffer>
    <experiments>5</experiments>
</comment>
<comment type="interaction">
    <interactant intactId="EBI-4441365">
        <id>Q8L746</id>
    </interactant>
    <interactant intactId="EBI-4470690">
        <id>Q93ZX1</id>
        <label>RFC4</label>
    </interactant>
    <organismsDiffer>false</organismsDiffer>
    <experiments>3</experiments>
</comment>
<comment type="interaction">
    <interactant intactId="EBI-4441365">
        <id>Q8L746</id>
    </interactant>
    <interactant intactId="EBI-541351">
        <id>Q39237</id>
        <label>TGA1</label>
    </interactant>
    <organismsDiffer>false</organismsDiffer>
    <experiments>3</experiments>
</comment>
<comment type="interaction">
    <interactant intactId="EBI-4441365">
        <id>Q8L746</id>
    </interactant>
    <interactant intactId="EBI-541307">
        <id>P43273</id>
        <label>TGA2</label>
    </interactant>
    <organismsDiffer>false</organismsDiffer>
    <experiments>9</experiments>
</comment>
<comment type="interaction">
    <interactant intactId="EBI-4441365">
        <id>Q8L746</id>
    </interactant>
    <interactant intactId="EBI-541366">
        <id>Q39234</id>
        <label>TGA3</label>
    </interactant>
    <organismsDiffer>false</organismsDiffer>
    <experiments>6</experiments>
</comment>
<comment type="interaction">
    <interactant intactId="EBI-4441365">
        <id>Q8L746</id>
    </interactant>
    <interactant intactId="EBI-541381">
        <id>Q39163</id>
        <label>TGA5</label>
    </interactant>
    <organismsDiffer>false</organismsDiffer>
    <experiments>4</experiments>
</comment>
<comment type="interaction">
    <interactant intactId="EBI-4441365">
        <id>Q8L746</id>
    </interactant>
    <interactant intactId="EBI-1237844">
        <id>Q93XM6</id>
        <label>TGA9</label>
    </interactant>
    <organismsDiffer>false</organismsDiffer>
    <experiments>3</experiments>
</comment>
<comment type="interaction">
    <interactant intactId="EBI-4441365">
        <id>Q8L746</id>
    </interactant>
    <interactant intactId="EBI-2119299">
        <id>Q94AI7</id>
        <label>TPL</label>
    </interactant>
    <organismsDiffer>false</organismsDiffer>
    <experiments>3</experiments>
</comment>
<comment type="subcellular location">
    <subcellularLocation>
        <location evidence="8">Nucleus</location>
    </subcellularLocation>
</comment>
<comment type="induction">
    <text evidence="8">Up-regulated following pathogen challenge or salicylic acid (SA) treatment.</text>
</comment>
<comment type="domain">
    <text evidence="7">The BTB/POZ domain mediates the interaction with some component of ubiquitin ligase complexes.</text>
</comment>
<comment type="disruption phenotype">
    <text evidence="8 9 11">Elevated PR-1 expression level and enhanced resistance to Hyaloperonospora parasitica (PubMed:17076807). The double mutant npr3 npr4 accumulates NPR1 proteins (while NPR1 transcripts level is normal) due to reduced NPR1 degradation by the proteasome; this leads to a reduced growth of the compatible pathogenic bacteria Pseudomonas syringae pv. maculicola ES4326 after inoculation, but impaired hypersensitive response (HR) and subsequent systemic acquired resistance (SAR) induction when infected by the avirulent strain Psm ES4326/avrRpt2 (PubMed:22699612, PubMed:32788727).</text>
</comment>
<comment type="similarity">
    <text evidence="13">Belongs to the plant 'ANKYRIN-BTB/POZ' family. 'NPR1-like' subfamily.</text>
</comment>
<comment type="sequence caution" evidence="13">
    <conflict type="erroneous gene model prediction">
        <sequence resource="EMBL-CDS" id="BAB09496"/>
    </conflict>
</comment>
<gene>
    <name evidence="12" type="primary">NPR3</name>
    <name evidence="14" type="ordered locus">At5g45110</name>
    <name evidence="15" type="ORF">K17O22_11</name>
</gene>
<evidence type="ECO:0000250" key="1">
    <source>
        <dbReference type="UniProtKB" id="P93002"/>
    </source>
</evidence>
<evidence type="ECO:0000250" key="2">
    <source>
        <dbReference type="UniProtKB" id="Q5ICL9"/>
    </source>
</evidence>
<evidence type="ECO:0000255" key="3"/>
<evidence type="ECO:0000255" key="4">
    <source>
        <dbReference type="PROSITE-ProRule" id="PRU00037"/>
    </source>
</evidence>
<evidence type="ECO:0000255" key="5">
    <source>
        <dbReference type="PROSITE-ProRule" id="PRU01391"/>
    </source>
</evidence>
<evidence type="ECO:0000256" key="6">
    <source>
        <dbReference type="SAM" id="MobiDB-lite"/>
    </source>
</evidence>
<evidence type="ECO:0000269" key="7">
    <source>
    </source>
</evidence>
<evidence type="ECO:0000269" key="8">
    <source>
    </source>
</evidence>
<evidence type="ECO:0000269" key="9">
    <source>
    </source>
</evidence>
<evidence type="ECO:0000269" key="10">
    <source>
    </source>
</evidence>
<evidence type="ECO:0000269" key="11">
    <source>
    </source>
</evidence>
<evidence type="ECO:0000303" key="12">
    <source>
    </source>
</evidence>
<evidence type="ECO:0000305" key="13"/>
<evidence type="ECO:0000312" key="14">
    <source>
        <dbReference type="Araport" id="AT5G45110"/>
    </source>
</evidence>
<evidence type="ECO:0000312" key="15">
    <source>
        <dbReference type="EMBL" id="BAB09496.1"/>
    </source>
</evidence>
<accession>Q8L746</accession>
<accession>Q9FHE3</accession>
<name>NPR3_ARATH</name>
<proteinExistence type="evidence at protein level"/>
<dbReference type="EMBL" id="AB019224">
    <property type="protein sequence ID" value="BAB09496.1"/>
    <property type="status" value="ALT_SEQ"/>
    <property type="molecule type" value="Genomic_DNA"/>
</dbReference>
<dbReference type="EMBL" id="CP002688">
    <property type="protein sequence ID" value="AED95205.1"/>
    <property type="molecule type" value="Genomic_DNA"/>
</dbReference>
<dbReference type="EMBL" id="AY139763">
    <property type="protein sequence ID" value="AAM98084.1"/>
    <property type="molecule type" value="mRNA"/>
</dbReference>
<dbReference type="EMBL" id="BT004537">
    <property type="protein sequence ID" value="AAO42783.1"/>
    <property type="molecule type" value="mRNA"/>
</dbReference>
<dbReference type="RefSeq" id="NP_199324.2">
    <property type="nucleotide sequence ID" value="NM_123879.3"/>
</dbReference>
<dbReference type="SMR" id="Q8L746"/>
<dbReference type="BioGRID" id="19794">
    <property type="interactions" value="18"/>
</dbReference>
<dbReference type="DIP" id="DIP-59898N"/>
<dbReference type="FunCoup" id="Q8L746">
    <property type="interactions" value="602"/>
</dbReference>
<dbReference type="IntAct" id="Q8L746">
    <property type="interactions" value="18"/>
</dbReference>
<dbReference type="STRING" id="3702.Q8L746"/>
<dbReference type="PaxDb" id="3702-AT5G45110.1"/>
<dbReference type="ProteomicsDB" id="250547"/>
<dbReference type="EnsemblPlants" id="AT5G45110.1">
    <property type="protein sequence ID" value="AT5G45110.1"/>
    <property type="gene ID" value="AT5G45110"/>
</dbReference>
<dbReference type="GeneID" id="834545"/>
<dbReference type="Gramene" id="AT5G45110.1">
    <property type="protein sequence ID" value="AT5G45110.1"/>
    <property type="gene ID" value="AT5G45110"/>
</dbReference>
<dbReference type="KEGG" id="ath:AT5G45110"/>
<dbReference type="Araport" id="AT5G45110"/>
<dbReference type="TAIR" id="AT5G45110">
    <property type="gene designation" value="NPR3"/>
</dbReference>
<dbReference type="eggNOG" id="KOG0504">
    <property type="taxonomic scope" value="Eukaryota"/>
</dbReference>
<dbReference type="HOGENOM" id="CLU_034895_1_0_1"/>
<dbReference type="InParanoid" id="Q8L746"/>
<dbReference type="OrthoDB" id="71307at2759"/>
<dbReference type="PhylomeDB" id="Q8L746"/>
<dbReference type="UniPathway" id="UPA00143"/>
<dbReference type="PRO" id="PR:Q8L746"/>
<dbReference type="Proteomes" id="UP000006548">
    <property type="component" value="Chromosome 5"/>
</dbReference>
<dbReference type="ExpressionAtlas" id="Q8L746">
    <property type="expression patterns" value="baseline and differential"/>
</dbReference>
<dbReference type="GO" id="GO:0005634">
    <property type="term" value="C:nucleus"/>
    <property type="evidence" value="ECO:0007669"/>
    <property type="project" value="UniProtKB-SubCell"/>
</dbReference>
<dbReference type="GO" id="GO:0042802">
    <property type="term" value="F:identical protein binding"/>
    <property type="evidence" value="ECO:0000353"/>
    <property type="project" value="IntAct"/>
</dbReference>
<dbReference type="GO" id="GO:0042803">
    <property type="term" value="F:protein homodimerization activity"/>
    <property type="evidence" value="ECO:0000314"/>
    <property type="project" value="UniProtKB"/>
</dbReference>
<dbReference type="GO" id="GO:1901149">
    <property type="term" value="F:salicylic acid binding"/>
    <property type="evidence" value="ECO:0000314"/>
    <property type="project" value="UniProtKB"/>
</dbReference>
<dbReference type="GO" id="GO:0008270">
    <property type="term" value="F:zinc ion binding"/>
    <property type="evidence" value="ECO:0007669"/>
    <property type="project" value="UniProtKB-KW"/>
</dbReference>
<dbReference type="GO" id="GO:0042742">
    <property type="term" value="P:defense response to bacterium"/>
    <property type="evidence" value="ECO:0000315"/>
    <property type="project" value="UniProtKB"/>
</dbReference>
<dbReference type="GO" id="GO:0050832">
    <property type="term" value="P:defense response to fungus"/>
    <property type="evidence" value="ECO:0000315"/>
    <property type="project" value="TAIR"/>
</dbReference>
<dbReference type="GO" id="GO:0009626">
    <property type="term" value="P:plant-type hypersensitive response"/>
    <property type="evidence" value="ECO:0000315"/>
    <property type="project" value="UniProtKB"/>
</dbReference>
<dbReference type="GO" id="GO:0016567">
    <property type="term" value="P:protein ubiquitination"/>
    <property type="evidence" value="ECO:0007669"/>
    <property type="project" value="UniProtKB-UniPathway"/>
</dbReference>
<dbReference type="GO" id="GO:2000022">
    <property type="term" value="P:regulation of jasmonic acid mediated signaling pathway"/>
    <property type="evidence" value="ECO:0007669"/>
    <property type="project" value="InterPro"/>
</dbReference>
<dbReference type="GO" id="GO:2000031">
    <property type="term" value="P:regulation of salicylic acid mediated signaling pathway"/>
    <property type="evidence" value="ECO:0007669"/>
    <property type="project" value="InterPro"/>
</dbReference>
<dbReference type="GO" id="GO:0010112">
    <property type="term" value="P:regulation of systemic acquired resistance"/>
    <property type="evidence" value="ECO:0000315"/>
    <property type="project" value="UniProtKB"/>
</dbReference>
<dbReference type="GO" id="GO:0009751">
    <property type="term" value="P:response to salicylic acid"/>
    <property type="evidence" value="ECO:0000314"/>
    <property type="project" value="UniProtKB"/>
</dbReference>
<dbReference type="GO" id="GO:0009627">
    <property type="term" value="P:systemic acquired resistance"/>
    <property type="evidence" value="ECO:0000316"/>
    <property type="project" value="TAIR"/>
</dbReference>
<dbReference type="GO" id="GO:0009862">
    <property type="term" value="P:systemic acquired resistance, salicylic acid mediated signaling pathway"/>
    <property type="evidence" value="ECO:0007669"/>
    <property type="project" value="InterPro"/>
</dbReference>
<dbReference type="CDD" id="cd18310">
    <property type="entry name" value="BTB_POZ_NPR_plant"/>
    <property type="match status" value="1"/>
</dbReference>
<dbReference type="FunFam" id="3.30.710.10:FF:000110">
    <property type="entry name" value="Regulatory protein NPR3"/>
    <property type="match status" value="1"/>
</dbReference>
<dbReference type="FunFam" id="1.25.40.20:FF:000123">
    <property type="entry name" value="regulatory protein NPR3-like"/>
    <property type="match status" value="1"/>
</dbReference>
<dbReference type="Gene3D" id="1.25.40.20">
    <property type="entry name" value="Ankyrin repeat-containing domain"/>
    <property type="match status" value="1"/>
</dbReference>
<dbReference type="Gene3D" id="3.30.710.10">
    <property type="entry name" value="Potassium Channel Kv1.1, Chain A"/>
    <property type="match status" value="1"/>
</dbReference>
<dbReference type="InterPro" id="IPR002110">
    <property type="entry name" value="Ankyrin_rpt"/>
</dbReference>
<dbReference type="InterPro" id="IPR036770">
    <property type="entry name" value="Ankyrin_rpt-contain_sf"/>
</dbReference>
<dbReference type="InterPro" id="IPR000210">
    <property type="entry name" value="BTB/POZ_dom"/>
</dbReference>
<dbReference type="InterPro" id="IPR044292">
    <property type="entry name" value="NPR"/>
</dbReference>
<dbReference type="InterPro" id="IPR021094">
    <property type="entry name" value="NPR1/NIM1-like_C"/>
</dbReference>
<dbReference type="InterPro" id="IPR024228">
    <property type="entry name" value="NPR_central_dom"/>
</dbReference>
<dbReference type="InterPro" id="IPR011333">
    <property type="entry name" value="SKP1/BTB/POZ_sf"/>
</dbReference>
<dbReference type="PANTHER" id="PTHR46475">
    <property type="entry name" value="REGULATORY PROTEIN NPR3"/>
    <property type="match status" value="1"/>
</dbReference>
<dbReference type="PANTHER" id="PTHR46475:SF2">
    <property type="entry name" value="REGULATORY PROTEIN NPR3"/>
    <property type="match status" value="1"/>
</dbReference>
<dbReference type="Pfam" id="PF12796">
    <property type="entry name" value="Ank_2"/>
    <property type="match status" value="1"/>
</dbReference>
<dbReference type="Pfam" id="PF00651">
    <property type="entry name" value="BTB"/>
    <property type="match status" value="1"/>
</dbReference>
<dbReference type="Pfam" id="PF11900">
    <property type="entry name" value="DUF3420"/>
    <property type="match status" value="1"/>
</dbReference>
<dbReference type="Pfam" id="PF12313">
    <property type="entry name" value="NPR1_like_C"/>
    <property type="match status" value="1"/>
</dbReference>
<dbReference type="SMART" id="SM00248">
    <property type="entry name" value="ANK"/>
    <property type="match status" value="2"/>
</dbReference>
<dbReference type="SMART" id="SM00225">
    <property type="entry name" value="BTB"/>
    <property type="match status" value="1"/>
</dbReference>
<dbReference type="SUPFAM" id="SSF48403">
    <property type="entry name" value="Ankyrin repeat"/>
    <property type="match status" value="1"/>
</dbReference>
<dbReference type="SUPFAM" id="SSF54695">
    <property type="entry name" value="POZ domain"/>
    <property type="match status" value="1"/>
</dbReference>
<dbReference type="PROSITE" id="PS50297">
    <property type="entry name" value="ANK_REP_REGION"/>
    <property type="match status" value="1"/>
</dbReference>
<dbReference type="PROSITE" id="PS50088">
    <property type="entry name" value="ANK_REPEAT"/>
    <property type="match status" value="1"/>
</dbReference>
<dbReference type="PROSITE" id="PS50097">
    <property type="entry name" value="BTB"/>
    <property type="match status" value="1"/>
</dbReference>
<dbReference type="PROSITE" id="PS52046">
    <property type="entry name" value="ZF_C2HC_NPR"/>
    <property type="match status" value="1"/>
</dbReference>
<keyword id="KW-0040">ANK repeat</keyword>
<keyword id="KW-0381">Hypersensitive response</keyword>
<keyword id="KW-0479">Metal-binding</keyword>
<keyword id="KW-0539">Nucleus</keyword>
<keyword id="KW-0597">Phosphoprotein</keyword>
<keyword id="KW-0611">Plant defense</keyword>
<keyword id="KW-1185">Reference proteome</keyword>
<keyword id="KW-0677">Repeat</keyword>
<keyword id="KW-0833">Ubl conjugation pathway</keyword>
<keyword id="KW-0862">Zinc</keyword>
<keyword id="KW-0863">Zinc-finger</keyword>
<sequence>MATLTEPSSSLSFTSSHFSYGSIGSNHFSSSSASNPEVVSLTKLSSNLEQLLSNSDCDYSDAEIIVDGVPVGVHRCILAARSKFFQDLFKKEKKISKTEKPKYQLREMLPYGAVAHEAFLYFLSYIYTGRLKPFPLEVSTCVDPVCSHDCCRPAIDFVVQLMYASSVLQVPELVSSFQRRLCNFVEKTLVENVLPILMVAFNCKLTQLLDQCIERVARSDLYRFCIEKEVPPEVAEKIKQLRLISPQDEETSPKISEKLLERIGKILKALDSDDVELVKLLLTESDITLDQANGLHYSVVYSDPKVVAEILALDMGDVNYRNSRGYTVLHFAAMRREPSIIISLIDKGANASEFTSDGRSAVNILRRLTNPKDYHTKTAKGRESSKARLCIDILEREIRKNPMVLDTPMCSISMPEDLQMRLLYLEKRVGLAQLFFPTEAKVAMDIGNVEGTSEFTGLSPPSSGLTGNLSQVDLNETPHMQTQRLLTRMVALMKTVETGRRFFPYGSEVLDKYMAEYIDDDILDDFHFEKGSTHERRLKRMRYRELKDDVQKAYSKDKESKIARSCLSASSSPSSSSIRDDLHNTT</sequence>
<reference key="1">
    <citation type="journal article" date="2000" name="DNA Res.">
        <title>Structural analysis of Arabidopsis thaliana chromosome 5. X. Sequence features of the regions of 3,076,755 bp covered by sixty P1 and TAC clones.</title>
        <authorList>
            <person name="Sato S."/>
            <person name="Nakamura Y."/>
            <person name="Kaneko T."/>
            <person name="Katoh T."/>
            <person name="Asamizu E."/>
            <person name="Kotani H."/>
            <person name="Tabata S."/>
        </authorList>
    </citation>
    <scope>NUCLEOTIDE SEQUENCE [LARGE SCALE GENOMIC DNA]</scope>
    <source>
        <strain>cv. Columbia</strain>
    </source>
</reference>
<reference key="2">
    <citation type="journal article" date="2017" name="Plant J.">
        <title>Araport11: a complete reannotation of the Arabidopsis thaliana reference genome.</title>
        <authorList>
            <person name="Cheng C.Y."/>
            <person name="Krishnakumar V."/>
            <person name="Chan A.P."/>
            <person name="Thibaud-Nissen F."/>
            <person name="Schobel S."/>
            <person name="Town C.D."/>
        </authorList>
    </citation>
    <scope>GENOME REANNOTATION</scope>
    <source>
        <strain>cv. Columbia</strain>
    </source>
</reference>
<reference key="3">
    <citation type="journal article" date="2003" name="Science">
        <title>Empirical analysis of transcriptional activity in the Arabidopsis genome.</title>
        <authorList>
            <person name="Yamada K."/>
            <person name="Lim J."/>
            <person name="Dale J.M."/>
            <person name="Chen H."/>
            <person name="Shinn P."/>
            <person name="Palm C.J."/>
            <person name="Southwick A.M."/>
            <person name="Wu H.C."/>
            <person name="Kim C.J."/>
            <person name="Nguyen M."/>
            <person name="Pham P.K."/>
            <person name="Cheuk R.F."/>
            <person name="Karlin-Newmann G."/>
            <person name="Liu S.X."/>
            <person name="Lam B."/>
            <person name="Sakano H."/>
            <person name="Wu T."/>
            <person name="Yu G."/>
            <person name="Miranda M."/>
            <person name="Quach H.L."/>
            <person name="Tripp M."/>
            <person name="Chang C.H."/>
            <person name="Lee J.M."/>
            <person name="Toriumi M.J."/>
            <person name="Chan M.M."/>
            <person name="Tang C.C."/>
            <person name="Onodera C.S."/>
            <person name="Deng J.M."/>
            <person name="Akiyama K."/>
            <person name="Ansari Y."/>
            <person name="Arakawa T."/>
            <person name="Banh J."/>
            <person name="Banno F."/>
            <person name="Bowser L."/>
            <person name="Brooks S.Y."/>
            <person name="Carninci P."/>
            <person name="Chao Q."/>
            <person name="Choy N."/>
            <person name="Enju A."/>
            <person name="Goldsmith A.D."/>
            <person name="Gurjal M."/>
            <person name="Hansen N.F."/>
            <person name="Hayashizaki Y."/>
            <person name="Johnson-Hopson C."/>
            <person name="Hsuan V.W."/>
            <person name="Iida K."/>
            <person name="Karnes M."/>
            <person name="Khan S."/>
            <person name="Koesema E."/>
            <person name="Ishida J."/>
            <person name="Jiang P.X."/>
            <person name="Jones T."/>
            <person name="Kawai J."/>
            <person name="Kamiya A."/>
            <person name="Meyers C."/>
            <person name="Nakajima M."/>
            <person name="Narusaka M."/>
            <person name="Seki M."/>
            <person name="Sakurai T."/>
            <person name="Satou M."/>
            <person name="Tamse R."/>
            <person name="Vaysberg M."/>
            <person name="Wallender E.K."/>
            <person name="Wong C."/>
            <person name="Yamamura Y."/>
            <person name="Yuan S."/>
            <person name="Shinozaki K."/>
            <person name="Davis R.W."/>
            <person name="Theologis A."/>
            <person name="Ecker J.R."/>
        </authorList>
    </citation>
    <scope>NUCLEOTIDE SEQUENCE [LARGE SCALE MRNA]</scope>
    <source>
        <strain>cv. Columbia</strain>
    </source>
</reference>
<reference key="4">
    <citation type="journal article" date="2005" name="J. Biol. Chem.">
        <title>Cullins 3a and 3b assemble with members of the broad complex/tramtrack/bric-a-brac (BTB) protein family to form essential ubiquitin-protein ligases (E3s) in Arabidopsis.</title>
        <authorList>
            <person name="Gingerich D.J."/>
            <person name="Gagne J.M."/>
            <person name="Salter D.W."/>
            <person name="Hellmann H."/>
            <person name="Estelle M."/>
            <person name="Ma L."/>
            <person name="Vierstra R.D."/>
        </authorList>
    </citation>
    <scope>DOMAIN BTB</scope>
</reference>
<reference key="5">
    <citation type="journal article" date="2005" name="Plant J.">
        <title>An Arabidopsis NPR1-like gene, NPR4, is required for disease resistance.</title>
        <authorList>
            <person name="Liu G."/>
            <person name="Holub E.B."/>
            <person name="Alonso J.M."/>
            <person name="Ecker J.R."/>
            <person name="Fobert P.R."/>
        </authorList>
    </citation>
    <scope>GENE FAMILY</scope>
    <scope>NOMENCLATURE</scope>
</reference>
<reference key="6">
    <citation type="journal article" date="2006" name="Plant J.">
        <title>Negative regulation of defense responses in Arabidopsis by two NPR1 paralogs.</title>
        <authorList>
            <person name="Zhang Y."/>
            <person name="Cheng Y.T."/>
            <person name="Qu N."/>
            <person name="Zhao Q."/>
            <person name="Bi D."/>
            <person name="Li X."/>
        </authorList>
    </citation>
    <scope>FUNCTION</scope>
    <scope>SUBCELLULAR LOCATION</scope>
    <scope>INDUCTION</scope>
    <scope>INTERACTION WITH TGA FACTORS</scope>
    <scope>DISRUPTION PHENOTYPE</scope>
</reference>
<reference key="7">
    <citation type="journal article" date="2012" name="Nature">
        <title>NPR3 and NPR4 are receptors for the immune signal salicylic acid in plants.</title>
        <authorList>
            <person name="Fu Z.Q."/>
            <person name="Yan S."/>
            <person name="Saleh A."/>
            <person name="Wang W."/>
            <person name="Ruble J."/>
            <person name="Oka N."/>
            <person name="Mohan R."/>
            <person name="Spoel S.H."/>
            <person name="Tada Y."/>
            <person name="Zheng N."/>
            <person name="Dong X."/>
        </authorList>
    </citation>
    <scope>FUNCTION</scope>
    <scope>DISRUPTION PHENOTYPE</scope>
    <scope>INTERACTION WITH NPR1; NPR4 AND CUL3A</scope>
    <scope>SUBUNIT</scope>
    <scope>PATHWAY</scope>
    <source>
        <strain>cv. Columbia</strain>
    </source>
</reference>
<reference key="8">
    <citation type="journal article" date="2015" name="Cell Host Microbe">
        <title>Posttranslational modifications of the master transcriptional regulator NPR1 enable dynamic but tight control of plant immune responses.</title>
        <authorList>
            <person name="Saleh A."/>
            <person name="Withers J."/>
            <person name="Mohan R."/>
            <person name="Marques J."/>
            <person name="Gu Y."/>
            <person name="Yan S."/>
            <person name="Zavaliev R."/>
            <person name="Nomoto M."/>
            <person name="Tada Y."/>
            <person name="Dong X."/>
        </authorList>
    </citation>
    <scope>FUNCTION</scope>
    <scope>INTERACTION WITH NPR1</scope>
</reference>
<reference key="9">
    <citation type="journal article" date="2020" name="Nature">
        <title>Structural basis of salicylic acid perception by Arabidopsis NPR proteins.</title>
        <authorList>
            <person name="Wang W."/>
            <person name="Withers J."/>
            <person name="Li H."/>
            <person name="Zwack P.J."/>
            <person name="Rusnac D.V."/>
            <person name="Shi H."/>
            <person name="Liu L."/>
            <person name="Yan S."/>
            <person name="Hinds T.R."/>
            <person name="Guttman M."/>
            <person name="Dong X."/>
            <person name="Zheng N."/>
        </authorList>
    </citation>
    <scope>FUNCTION</scope>
    <scope>DISRUPTION PHENOTYPE</scope>
    <scope>MUTAGENESIS OF ARG-428</scope>
    <scope>SALICYLATE BINDING</scope>
    <source>
        <strain>cv. Columbia</strain>
    </source>
</reference>
<organism>
    <name type="scientific">Arabidopsis thaliana</name>
    <name type="common">Mouse-ear cress</name>
    <dbReference type="NCBI Taxonomy" id="3702"/>
    <lineage>
        <taxon>Eukaryota</taxon>
        <taxon>Viridiplantae</taxon>
        <taxon>Streptophyta</taxon>
        <taxon>Embryophyta</taxon>
        <taxon>Tracheophyta</taxon>
        <taxon>Spermatophyta</taxon>
        <taxon>Magnoliopsida</taxon>
        <taxon>eudicotyledons</taxon>
        <taxon>Gunneridae</taxon>
        <taxon>Pentapetalae</taxon>
        <taxon>rosids</taxon>
        <taxon>malvids</taxon>
        <taxon>Brassicales</taxon>
        <taxon>Brassicaceae</taxon>
        <taxon>Camelineae</taxon>
        <taxon>Arabidopsis</taxon>
    </lineage>
</organism>